<organismHost>
    <name type="scientific">Cynomys gunnisoni</name>
    <name type="common">Gunnison's prairie dog</name>
    <name type="synonym">Spermophilus gunnisoni</name>
    <dbReference type="NCBI Taxonomy" id="45479"/>
</organismHost>
<organismHost>
    <name type="scientific">Cynomys leucurus</name>
    <name type="common">White-tailed prairie dog</name>
    <dbReference type="NCBI Taxonomy" id="99825"/>
</organismHost>
<organismHost>
    <name type="scientific">Cynomys ludovicianus</name>
    <name type="common">Black-tailed prairie dog</name>
    <dbReference type="NCBI Taxonomy" id="45480"/>
</organismHost>
<organismHost>
    <name type="scientific">Cynomys mexicanus</name>
    <name type="common">Mexican prairie dog</name>
    <dbReference type="NCBI Taxonomy" id="99826"/>
</organismHost>
<organismHost>
    <name type="scientific">Cynomys parvidens</name>
    <name type="common">Utah prairie dog</name>
    <dbReference type="NCBI Taxonomy" id="99827"/>
</organismHost>
<organismHost>
    <name type="scientific">Gliridae</name>
    <name type="common">dormice</name>
    <dbReference type="NCBI Taxonomy" id="30650"/>
</organismHost>
<organismHost>
    <name type="scientific">Heliosciurus ruwenzorii</name>
    <name type="common">Ruwenzori sun squirrel</name>
    <dbReference type="NCBI Taxonomy" id="226685"/>
</organismHost>
<organismHost>
    <name type="scientific">Homo sapiens</name>
    <name type="common">Human</name>
    <dbReference type="NCBI Taxonomy" id="9606"/>
</organismHost>
<organismHost>
    <name type="scientific">Mus musculus</name>
    <name type="common">Mouse</name>
    <dbReference type="NCBI Taxonomy" id="10090"/>
</organismHost>
<evidence type="ECO:0000250" key="1"/>
<evidence type="ECO:0000305" key="2"/>
<evidence type="ECO:0007829" key="3">
    <source>
        <dbReference type="PDB" id="4QWO"/>
    </source>
</evidence>
<accession>Q8V4T7</accession>
<organism>
    <name type="scientific">Monkeypox virus (strain Zaire-96-I-16)</name>
    <name type="common">MPX</name>
    <dbReference type="NCBI Taxonomy" id="619591"/>
    <lineage>
        <taxon>Viruses</taxon>
        <taxon>Varidnaviria</taxon>
        <taxon>Bamfordvirae</taxon>
        <taxon>Nucleocytoviricota</taxon>
        <taxon>Pokkesviricetes</taxon>
        <taxon>Chitovirales</taxon>
        <taxon>Poxviridae</taxon>
        <taxon>Chordopoxvirinae</taxon>
        <taxon>Orthopoxvirus</taxon>
        <taxon>Monkeypox virus</taxon>
    </lineage>
</organism>
<keyword id="KW-0002">3D-structure</keyword>
<keyword id="KW-0009">Actin-binding</keyword>
<sequence length="133" mass="15003">MAEWHKIIEDISKNNKFEDAAIVDYKTTKNVLAAIPNRTFAKINPGEVIPLITNHNILKPLIGQKFCIVYTNSLMDENTYAMELLTGYAPVSPIVIARTHTALIFLMGKPTTSRRDVYRTCRDHATRVRATGN</sequence>
<proteinExistence type="evidence at protein level"/>
<name>PROF_MONPZ</name>
<gene>
    <name type="primary">OPG171</name>
    <name type="ORF">A42R</name>
</gene>
<reference key="1">
    <citation type="journal article" date="2001" name="FEBS Lett.">
        <title>Human monkeypox and smallpox viruses: genomic comparison.</title>
        <authorList>
            <person name="Shchelkunov S.N."/>
            <person name="Totmenin A.V."/>
            <person name="Babkin I.V."/>
            <person name="Safronov P.F."/>
            <person name="Ryazankina O.I."/>
            <person name="Petrov N.A."/>
            <person name="Gutorov V.V."/>
            <person name="Uvarova E.A."/>
            <person name="Mikheev M.V."/>
            <person name="Sisler J.R."/>
            <person name="Esposito J.J."/>
            <person name="Jahrling P.B."/>
            <person name="Moss B."/>
            <person name="Sandakhchiev L.S."/>
        </authorList>
    </citation>
    <scope>NUCLEOTIDE SEQUENCE [LARGE SCALE GENOMIC DNA]</scope>
    <source>
        <strain>Zaire-96-I-16</strain>
    </source>
</reference>
<reference key="2">
    <citation type="journal article" date="2022" name="Acta Crystallogr. F Struct. Biol. Commun.">
        <title>Structure of the Monkeypox virus profilin-like protein A42R reveals potential functional differences from cellular profilins.</title>
        <authorList>
            <person name="Minasov G."/>
            <person name="Inniss N.L."/>
            <person name="Shuvalova L."/>
            <person name="Anderson W.F."/>
            <person name="Satchell K.J.F."/>
        </authorList>
    </citation>
    <scope>X-RAY CRYSTALLOGRAPHY (1.52 ANGSTROMS) OF 1-133</scope>
</reference>
<protein>
    <recommendedName>
        <fullName>Profilin</fullName>
    </recommendedName>
</protein>
<comment type="function">
    <text evidence="1">More likely to influence phosphoinositide metabolism than actin assembly.</text>
</comment>
<comment type="similarity">
    <text evidence="2">Belongs to the profilin family.</text>
</comment>
<dbReference type="EMBL" id="AF380138">
    <property type="protein sequence ID" value="AAL40610.1"/>
    <property type="molecule type" value="Genomic_DNA"/>
</dbReference>
<dbReference type="RefSeq" id="NP_536579.1">
    <property type="nucleotide sequence ID" value="NC_003310.1"/>
</dbReference>
<dbReference type="PDB" id="4QWO">
    <property type="method" value="X-ray"/>
    <property type="resolution" value="1.52 A"/>
    <property type="chains" value="A/B=1-133"/>
</dbReference>
<dbReference type="PDBsum" id="4QWO"/>
<dbReference type="SMR" id="Q8V4T7"/>
<dbReference type="GeneID" id="928946"/>
<dbReference type="KEGG" id="vg:928946"/>
<dbReference type="EvolutionaryTrace" id="Q8V4T7"/>
<dbReference type="Proteomes" id="UP000101269">
    <property type="component" value="Genome"/>
</dbReference>
<dbReference type="GO" id="GO:0003779">
    <property type="term" value="F:actin binding"/>
    <property type="evidence" value="ECO:0007669"/>
    <property type="project" value="UniProtKB-KW"/>
</dbReference>
<dbReference type="Gene3D" id="3.30.450.30">
    <property type="entry name" value="Dynein light chain 2a, cytoplasmic"/>
    <property type="match status" value="1"/>
</dbReference>
<dbReference type="InterPro" id="IPR048278">
    <property type="entry name" value="PFN"/>
</dbReference>
<dbReference type="InterPro" id="IPR005455">
    <property type="entry name" value="PFN_euk"/>
</dbReference>
<dbReference type="InterPro" id="IPR036140">
    <property type="entry name" value="PFN_sf"/>
</dbReference>
<dbReference type="InterPro" id="IPR027310">
    <property type="entry name" value="Profilin_CS"/>
</dbReference>
<dbReference type="Pfam" id="PF00235">
    <property type="entry name" value="Profilin"/>
    <property type="match status" value="1"/>
</dbReference>
<dbReference type="SMART" id="SM00392">
    <property type="entry name" value="PROF"/>
    <property type="match status" value="1"/>
</dbReference>
<dbReference type="SUPFAM" id="SSF55770">
    <property type="entry name" value="Profilin (actin-binding protein)"/>
    <property type="match status" value="1"/>
</dbReference>
<dbReference type="PROSITE" id="PS00414">
    <property type="entry name" value="PROFILIN"/>
    <property type="match status" value="1"/>
</dbReference>
<feature type="chain" id="PRO_0000199690" description="Profilin">
    <location>
        <begin position="1"/>
        <end position="133"/>
    </location>
</feature>
<feature type="helix" evidence="3">
    <location>
        <begin position="1"/>
        <end position="12"/>
    </location>
</feature>
<feature type="strand" evidence="3">
    <location>
        <begin position="17"/>
        <end position="24"/>
    </location>
</feature>
<feature type="strand" evidence="3">
    <location>
        <begin position="26"/>
        <end position="28"/>
    </location>
</feature>
<feature type="strand" evidence="3">
    <location>
        <begin position="31"/>
        <end position="34"/>
    </location>
</feature>
<feature type="helix" evidence="3">
    <location>
        <begin position="40"/>
        <end position="42"/>
    </location>
</feature>
<feature type="helix" evidence="3">
    <location>
        <begin position="45"/>
        <end position="53"/>
    </location>
</feature>
<feature type="strand" evidence="3">
    <location>
        <begin position="65"/>
        <end position="73"/>
    </location>
</feature>
<feature type="turn" evidence="3">
    <location>
        <begin position="77"/>
        <end position="79"/>
    </location>
</feature>
<feature type="strand" evidence="3">
    <location>
        <begin position="81"/>
        <end position="90"/>
    </location>
</feature>
<feature type="strand" evidence="3">
    <location>
        <begin position="93"/>
        <end position="98"/>
    </location>
</feature>
<feature type="strand" evidence="3">
    <location>
        <begin position="100"/>
        <end position="108"/>
    </location>
</feature>
<feature type="helix" evidence="3">
    <location>
        <begin position="114"/>
        <end position="129"/>
    </location>
</feature>
<feature type="turn" evidence="3">
    <location>
        <begin position="130"/>
        <end position="132"/>
    </location>
</feature>